<protein>
    <recommendedName>
        <fullName>N-terminal EF-hand calcium-binding protein 1</fullName>
        <shortName>EF-hand calcium-binding protein 1</shortName>
    </recommendedName>
    <alternativeName>
        <fullName>Neuronal calcium-binding protein 1</fullName>
    </alternativeName>
</protein>
<feature type="chain" id="PRO_0000282609" description="N-terminal EF-hand calcium-binding protein 1">
    <location>
        <begin position="1"/>
        <end position="351"/>
    </location>
</feature>
<feature type="domain" description="EF-hand 1" evidence="5">
    <location>
        <begin position="26"/>
        <end position="61"/>
    </location>
</feature>
<feature type="domain" description="EF-hand 2" evidence="5">
    <location>
        <begin position="60"/>
        <end position="95"/>
    </location>
</feature>
<feature type="domain" description="ABM">
    <location>
        <begin position="252"/>
        <end position="340"/>
    </location>
</feature>
<feature type="region of interest" description="Disordered" evidence="6">
    <location>
        <begin position="180"/>
        <end position="203"/>
    </location>
</feature>
<feature type="coiled-coil region" evidence="4">
    <location>
        <begin position="135"/>
        <end position="163"/>
    </location>
</feature>
<feature type="coiled-coil region" evidence="4">
    <location>
        <begin position="209"/>
        <end position="275"/>
    </location>
</feature>
<feature type="compositionally biased region" description="Polar residues" evidence="6">
    <location>
        <begin position="190"/>
        <end position="202"/>
    </location>
</feature>
<feature type="binding site" evidence="5">
    <location>
        <position position="39"/>
    </location>
    <ligand>
        <name>Ca(2+)</name>
        <dbReference type="ChEBI" id="CHEBI:29108"/>
    </ligand>
</feature>
<feature type="binding site" evidence="5">
    <location>
        <position position="41"/>
    </location>
    <ligand>
        <name>Ca(2+)</name>
        <dbReference type="ChEBI" id="CHEBI:29108"/>
    </ligand>
</feature>
<feature type="binding site" evidence="5">
    <location>
        <position position="43"/>
    </location>
    <ligand>
        <name>Ca(2+)</name>
        <dbReference type="ChEBI" id="CHEBI:29108"/>
    </ligand>
</feature>
<feature type="binding site" evidence="5">
    <location>
        <position position="45"/>
    </location>
    <ligand>
        <name>Ca(2+)</name>
        <dbReference type="ChEBI" id="CHEBI:29108"/>
    </ligand>
</feature>
<feature type="binding site" evidence="5">
    <location>
        <position position="50"/>
    </location>
    <ligand>
        <name>Ca(2+)</name>
        <dbReference type="ChEBI" id="CHEBI:29108"/>
    </ligand>
</feature>
<feature type="modified residue" description="Phosphoserine" evidence="3">
    <location>
        <position position="4"/>
    </location>
</feature>
<feature type="modified residue" description="Phosphoserine" evidence="2">
    <location>
        <position position="192"/>
    </location>
</feature>
<feature type="modified residue" description="Phosphoserine" evidence="2">
    <location>
        <position position="197"/>
    </location>
</feature>
<feature type="splice variant" id="VSP_024214" description="In isoform 2." evidence="8">
    <location>
        <begin position="1"/>
        <end position="251"/>
    </location>
</feature>
<feature type="sequence conflict" description="In Ref. 4; AAH68448." evidence="9" ref="4">
    <original>D</original>
    <variation>G</variation>
    <location>
        <position position="105"/>
    </location>
</feature>
<feature type="sequence conflict" description="In Ref. 4; AAH16340." evidence="9" ref="4">
    <original>I</original>
    <variation>M</variation>
    <location>
        <position position="261"/>
    </location>
</feature>
<dbReference type="EMBL" id="AY224210">
    <property type="protein sequence ID" value="AAO34126.1"/>
    <property type="molecule type" value="mRNA"/>
</dbReference>
<dbReference type="EMBL" id="AF414126">
    <property type="protein sequence ID" value="AAP33146.1"/>
    <property type="molecule type" value="mRNA"/>
</dbReference>
<dbReference type="EMBL" id="AK095533">
    <property type="protein sequence ID" value="BAC04568.1"/>
    <property type="molecule type" value="mRNA"/>
</dbReference>
<dbReference type="EMBL" id="BC016340">
    <property type="protein sequence ID" value="AAH16340.1"/>
    <property type="molecule type" value="mRNA"/>
</dbReference>
<dbReference type="EMBL" id="BC068448">
    <property type="protein sequence ID" value="AAH68448.1"/>
    <property type="molecule type" value="mRNA"/>
</dbReference>
<dbReference type="EMBL" id="AF193756">
    <property type="protein sequence ID" value="AAG28412.1"/>
    <property type="molecule type" value="mRNA"/>
</dbReference>
<dbReference type="CCDS" id="CCDS47889.1">
    <molecule id="Q8N987-1"/>
</dbReference>
<dbReference type="RefSeq" id="NP_071746.1">
    <molecule id="Q8N987-1"/>
    <property type="nucleotide sequence ID" value="NM_022351.5"/>
</dbReference>
<dbReference type="SMR" id="Q8N987"/>
<dbReference type="BioGRID" id="122093">
    <property type="interactions" value="34"/>
</dbReference>
<dbReference type="FunCoup" id="Q8N987">
    <property type="interactions" value="1374"/>
</dbReference>
<dbReference type="IntAct" id="Q8N987">
    <property type="interactions" value="31"/>
</dbReference>
<dbReference type="STRING" id="9606.ENSP00000387380"/>
<dbReference type="TCDB" id="8.A.82.5.2">
    <property type="family name" value="the calmodulin calcium binding protein (calmodulin) family"/>
</dbReference>
<dbReference type="iPTMnet" id="Q8N987"/>
<dbReference type="PhosphoSitePlus" id="Q8N987"/>
<dbReference type="SwissPalm" id="Q8N987"/>
<dbReference type="BioMuta" id="NECAB1"/>
<dbReference type="DMDM" id="74760025"/>
<dbReference type="MassIVE" id="Q8N987"/>
<dbReference type="PaxDb" id="9606-ENSP00000387380"/>
<dbReference type="PeptideAtlas" id="Q8N987"/>
<dbReference type="ProteomicsDB" id="72503">
    <molecule id="Q8N987-1"/>
</dbReference>
<dbReference type="ProteomicsDB" id="72504">
    <molecule id="Q8N987-2"/>
</dbReference>
<dbReference type="Antibodypedia" id="6629">
    <property type="antibodies" value="226 antibodies from 23 providers"/>
</dbReference>
<dbReference type="DNASU" id="64168"/>
<dbReference type="Ensembl" id="ENST00000417640.7">
    <molecule id="Q8N987-1"/>
    <property type="protein sequence ID" value="ENSP00000387380.2"/>
    <property type="gene ID" value="ENSG00000123119.12"/>
</dbReference>
<dbReference type="Ensembl" id="ENST00000521366.1">
    <molecule id="Q8N987-2"/>
    <property type="protein sequence ID" value="ENSP00000428632.1"/>
    <property type="gene ID" value="ENSG00000123119.12"/>
</dbReference>
<dbReference type="Ensembl" id="ENST00000522820.5">
    <molecule id="Q8N987-2"/>
    <property type="protein sequence ID" value="ENSP00000428953.1"/>
    <property type="gene ID" value="ENSG00000123119.12"/>
</dbReference>
<dbReference type="GeneID" id="64168"/>
<dbReference type="KEGG" id="hsa:64168"/>
<dbReference type="MANE-Select" id="ENST00000417640.7">
    <property type="protein sequence ID" value="ENSP00000387380.2"/>
    <property type="RefSeq nucleotide sequence ID" value="NM_022351.5"/>
    <property type="RefSeq protein sequence ID" value="NP_071746.1"/>
</dbReference>
<dbReference type="UCSC" id="uc003yer.4">
    <molecule id="Q8N987-1"/>
    <property type="organism name" value="human"/>
</dbReference>
<dbReference type="AGR" id="HGNC:20983"/>
<dbReference type="CTD" id="64168"/>
<dbReference type="DisGeNET" id="64168"/>
<dbReference type="GeneCards" id="NECAB1"/>
<dbReference type="HGNC" id="HGNC:20983">
    <property type="gene designation" value="NECAB1"/>
</dbReference>
<dbReference type="HPA" id="ENSG00000123119">
    <property type="expression patterns" value="Group enriched (brain, choroid plexus)"/>
</dbReference>
<dbReference type="neXtProt" id="NX_Q8N987"/>
<dbReference type="OpenTargets" id="ENSG00000123119"/>
<dbReference type="PharmGKB" id="PA162397411"/>
<dbReference type="VEuPathDB" id="HostDB:ENSG00000123119"/>
<dbReference type="eggNOG" id="ENOG502QWRY">
    <property type="taxonomic scope" value="Eukaryota"/>
</dbReference>
<dbReference type="GeneTree" id="ENSGT00950000183131"/>
<dbReference type="HOGENOM" id="CLU_041553_0_0_1"/>
<dbReference type="InParanoid" id="Q8N987"/>
<dbReference type="OMA" id="EDSQWMI"/>
<dbReference type="OrthoDB" id="289247at2759"/>
<dbReference type="PAN-GO" id="Q8N987">
    <property type="GO annotations" value="2 GO annotations based on evolutionary models"/>
</dbReference>
<dbReference type="PhylomeDB" id="Q8N987"/>
<dbReference type="TreeFam" id="TF331029"/>
<dbReference type="PathwayCommons" id="Q8N987"/>
<dbReference type="SignaLink" id="Q8N987"/>
<dbReference type="BioGRID-ORCS" id="64168">
    <property type="hits" value="12 hits in 1159 CRISPR screens"/>
</dbReference>
<dbReference type="ChiTaRS" id="NECAB1">
    <property type="organism name" value="human"/>
</dbReference>
<dbReference type="GenomeRNAi" id="64168"/>
<dbReference type="Pharos" id="Q8N987">
    <property type="development level" value="Tbio"/>
</dbReference>
<dbReference type="PRO" id="PR:Q8N987"/>
<dbReference type="Proteomes" id="UP000005640">
    <property type="component" value="Chromosome 8"/>
</dbReference>
<dbReference type="RNAct" id="Q8N987">
    <property type="molecule type" value="protein"/>
</dbReference>
<dbReference type="Bgee" id="ENSG00000123119">
    <property type="expression patterns" value="Expressed in Brodmann (1909) area 9 and 120 other cell types or tissues"/>
</dbReference>
<dbReference type="GO" id="GO:0005929">
    <property type="term" value="C:cilium"/>
    <property type="evidence" value="ECO:0000314"/>
    <property type="project" value="HPA"/>
</dbReference>
<dbReference type="GO" id="GO:0005737">
    <property type="term" value="C:cytoplasm"/>
    <property type="evidence" value="ECO:0000318"/>
    <property type="project" value="GO_Central"/>
</dbReference>
<dbReference type="GO" id="GO:0005829">
    <property type="term" value="C:cytosol"/>
    <property type="evidence" value="ECO:0000314"/>
    <property type="project" value="HPA"/>
</dbReference>
<dbReference type="GO" id="GO:0005654">
    <property type="term" value="C:nucleoplasm"/>
    <property type="evidence" value="ECO:0000314"/>
    <property type="project" value="HPA"/>
</dbReference>
<dbReference type="GO" id="GO:0005509">
    <property type="term" value="F:calcium ion binding"/>
    <property type="evidence" value="ECO:0007669"/>
    <property type="project" value="InterPro"/>
</dbReference>
<dbReference type="GO" id="GO:0042802">
    <property type="term" value="F:identical protein binding"/>
    <property type="evidence" value="ECO:0000353"/>
    <property type="project" value="IntAct"/>
</dbReference>
<dbReference type="GO" id="GO:0001835">
    <property type="term" value="P:blastocyst hatching"/>
    <property type="evidence" value="ECO:0007669"/>
    <property type="project" value="Ensembl"/>
</dbReference>
<dbReference type="GO" id="GO:0042984">
    <property type="term" value="P:regulation of amyloid precursor protein biosynthetic process"/>
    <property type="evidence" value="ECO:0000318"/>
    <property type="project" value="GO_Central"/>
</dbReference>
<dbReference type="FunFam" id="3.30.70.100:FF:000025">
    <property type="entry name" value="N-terminal EF-hand calcium-binding protein 1"/>
    <property type="match status" value="1"/>
</dbReference>
<dbReference type="FunFam" id="1.10.238.10:FF:000642">
    <property type="entry name" value="Uncharacterized protein"/>
    <property type="match status" value="1"/>
</dbReference>
<dbReference type="Gene3D" id="3.30.70.100">
    <property type="match status" value="1"/>
</dbReference>
<dbReference type="Gene3D" id="1.10.238.10">
    <property type="entry name" value="EF-hand"/>
    <property type="match status" value="1"/>
</dbReference>
<dbReference type="InterPro" id="IPR007138">
    <property type="entry name" value="ABM_dom"/>
</dbReference>
<dbReference type="InterPro" id="IPR011008">
    <property type="entry name" value="Dimeric_a/b-barrel"/>
</dbReference>
<dbReference type="InterPro" id="IPR011992">
    <property type="entry name" value="EF-hand-dom_pair"/>
</dbReference>
<dbReference type="InterPro" id="IPR018247">
    <property type="entry name" value="EF_Hand_1_Ca_BS"/>
</dbReference>
<dbReference type="InterPro" id="IPR002048">
    <property type="entry name" value="EF_hand_dom"/>
</dbReference>
<dbReference type="InterPro" id="IPR039862">
    <property type="entry name" value="NECAB1/2/3"/>
</dbReference>
<dbReference type="PANTHER" id="PTHR12178">
    <property type="entry name" value="EF-HAND DOMAIN-CONTAINING PROTEIN"/>
    <property type="match status" value="1"/>
</dbReference>
<dbReference type="PANTHER" id="PTHR12178:SF11">
    <property type="entry name" value="N-TERMINAL EF-HAND CALCIUM-BINDING PROTEIN 1"/>
    <property type="match status" value="1"/>
</dbReference>
<dbReference type="Pfam" id="PF03992">
    <property type="entry name" value="ABM"/>
    <property type="match status" value="1"/>
</dbReference>
<dbReference type="SMART" id="SM00054">
    <property type="entry name" value="EFh"/>
    <property type="match status" value="2"/>
</dbReference>
<dbReference type="SUPFAM" id="SSF54909">
    <property type="entry name" value="Dimeric alpha+beta barrel"/>
    <property type="match status" value="1"/>
</dbReference>
<dbReference type="SUPFAM" id="SSF47473">
    <property type="entry name" value="EF-hand"/>
    <property type="match status" value="1"/>
</dbReference>
<dbReference type="PROSITE" id="PS51725">
    <property type="entry name" value="ABM"/>
    <property type="match status" value="1"/>
</dbReference>
<dbReference type="PROSITE" id="PS00018">
    <property type="entry name" value="EF_HAND_1"/>
    <property type="match status" value="1"/>
</dbReference>
<dbReference type="PROSITE" id="PS50222">
    <property type="entry name" value="EF_HAND_2"/>
    <property type="match status" value="2"/>
</dbReference>
<proteinExistence type="evidence at protein level"/>
<comment type="subunit">
    <text evidence="7">Interacts with STX1 (PubMed:12044471). May interact with CPNE6 (PubMed:12044471).</text>
</comment>
<comment type="interaction">
    <interactant intactId="EBI-11956853">
        <id>Q8N987</id>
    </interactant>
    <interactant intactId="EBI-541426">
        <id>Q9BXS5</id>
        <label>AP1M1</label>
    </interactant>
    <organismsDiffer>false</organismsDiffer>
    <experiments>3</experiments>
</comment>
<comment type="interaction">
    <interactant intactId="EBI-11956853">
        <id>Q8N987</id>
    </interactant>
    <interactant intactId="EBI-10179267">
        <id>O00244</id>
        <label>ATOX1</label>
    </interactant>
    <organismsDiffer>false</organismsDiffer>
    <experiments>3</experiments>
</comment>
<comment type="interaction">
    <interactant intactId="EBI-11956853">
        <id>Q8N987</id>
    </interactant>
    <interactant intactId="EBI-17508719">
        <id>Q7RTU4</id>
        <label>BHLHA9</label>
    </interactant>
    <organismsDiffer>false</organismsDiffer>
    <experiments>3</experiments>
</comment>
<comment type="interaction">
    <interactant intactId="EBI-11956853">
        <id>Q8N987</id>
    </interactant>
    <interactant intactId="EBI-12065306">
        <id>P55201-2</id>
        <label>BRPF1</label>
    </interactant>
    <organismsDiffer>false</organismsDiffer>
    <experiments>3</experiments>
</comment>
<comment type="interaction">
    <interactant intactId="EBI-11956853">
        <id>Q8N987</id>
    </interactant>
    <interactant intactId="EBI-295634">
        <id>Q16543</id>
        <label>CDC37</label>
    </interactant>
    <organismsDiffer>false</organismsDiffer>
    <experiments>3</experiments>
</comment>
<comment type="interaction">
    <interactant intactId="EBI-11956853">
        <id>Q8N987</id>
    </interactant>
    <interactant intactId="EBI-12302039">
        <id>Q96A23-2</id>
        <label>CPNE4</label>
    </interactant>
    <organismsDiffer>false</organismsDiffer>
    <experiments>6</experiments>
</comment>
<comment type="interaction">
    <interactant intactId="EBI-11956853">
        <id>Q8N987</id>
    </interactant>
    <interactant intactId="EBI-12012272">
        <id>Q9UBL6-2</id>
        <label>CPNE7</label>
    </interactant>
    <organismsDiffer>false</organismsDiffer>
    <experiments>7</experiments>
</comment>
<comment type="interaction">
    <interactant intactId="EBI-11956853">
        <id>Q8N987</id>
    </interactant>
    <interactant intactId="EBI-1642325">
        <id>Q86YQ8</id>
        <label>CPNE8</label>
    </interactant>
    <organismsDiffer>false</organismsDiffer>
    <experiments>3</experiments>
</comment>
<comment type="interaction">
    <interactant intactId="EBI-11956853">
        <id>Q8N987</id>
    </interactant>
    <interactant intactId="EBI-11988027">
        <id>Q9NRI5-2</id>
        <label>DISC1</label>
    </interactant>
    <organismsDiffer>false</organismsDiffer>
    <experiments>3</experiments>
</comment>
<comment type="interaction">
    <interactant intactId="EBI-11956853">
        <id>Q8N987</id>
    </interactant>
    <interactant intactId="EBI-739832">
        <id>Q8TBB1</id>
        <label>LNX1</label>
    </interactant>
    <organismsDiffer>false</organismsDiffer>
    <experiments>3</experiments>
</comment>
<comment type="interaction">
    <interactant intactId="EBI-11956853">
        <id>Q8N987</id>
    </interactant>
    <interactant intactId="EBI-10288852">
        <id>Q9UBU8-2</id>
        <label>MORF4L1</label>
    </interactant>
    <organismsDiffer>false</organismsDiffer>
    <experiments>3</experiments>
</comment>
<comment type="interaction">
    <interactant intactId="EBI-11956853">
        <id>Q8N987</id>
    </interactant>
    <interactant intactId="EBI-11956853">
        <id>Q8N987</id>
        <label>NECAB1</label>
    </interactant>
    <organismsDiffer>false</organismsDiffer>
    <experiments>5</experiments>
</comment>
<comment type="interaction">
    <interactant intactId="EBI-11956853">
        <id>Q8N987</id>
    </interactant>
    <interactant intactId="EBI-10172876">
        <id>Q7Z6G3-2</id>
        <label>NECAB2</label>
    </interactant>
    <organismsDiffer>false</organismsDiffer>
    <experiments>3</experiments>
</comment>
<comment type="interaction">
    <interactant intactId="EBI-11956853">
        <id>Q8N987</id>
    </interactant>
    <interactant intactId="EBI-10240813">
        <id>Q3KNR5</id>
        <label>PAX4</label>
    </interactant>
    <organismsDiffer>false</organismsDiffer>
    <experiments>3</experiments>
</comment>
<comment type="interaction">
    <interactant intactId="EBI-11956853">
        <id>Q8N987</id>
    </interactant>
    <interactant intactId="EBI-10329449">
        <id>Q9Y5W9</id>
        <label>SNX11</label>
    </interactant>
    <organismsDiffer>false</organismsDiffer>
    <experiments>3</experiments>
</comment>
<comment type="interaction">
    <interactant intactId="EBI-11956853">
        <id>Q8N987</id>
    </interactant>
    <interactant intactId="EBI-710310">
        <id>Q15560</id>
        <label>TCEA2</label>
    </interactant>
    <organismsDiffer>false</organismsDiffer>
    <experiments>3</experiments>
</comment>
<comment type="interaction">
    <interactant intactId="EBI-11956853">
        <id>Q8N987</id>
    </interactant>
    <interactant intactId="EBI-11955057">
        <id>Q8N8B7-2</id>
        <label>TCEANC</label>
    </interactant>
    <organismsDiffer>false</organismsDiffer>
    <experiments>3</experiments>
</comment>
<comment type="interaction">
    <interactant intactId="EBI-11956853">
        <id>Q8N987</id>
    </interactant>
    <interactant intactId="EBI-10255097">
        <id>Q6ZN96</id>
    </interactant>
    <organismsDiffer>false</organismsDiffer>
    <experiments>3</experiments>
</comment>
<comment type="subcellular location">
    <subcellularLocation>
        <location evidence="1">Cytoplasm</location>
    </subcellularLocation>
</comment>
<comment type="alternative products">
    <event type="alternative splicing"/>
    <isoform>
        <id>Q8N987-1</id>
        <name>1</name>
        <sequence type="displayed"/>
    </isoform>
    <isoform>
        <id>Q8N987-2</id>
        <name>2</name>
        <sequence type="described" ref="VSP_024214"/>
    </isoform>
</comment>
<comment type="tissue specificity">
    <text evidence="7">Expressed in brain (at protein level).</text>
</comment>
<name>NECA1_HUMAN</name>
<gene>
    <name type="primary">NECAB1</name>
    <name type="synonym">EFCBP1</name>
</gene>
<reference key="1">
    <citation type="submission" date="2003-01" db="EMBL/GenBank/DDBJ databases">
        <title>Necab1: a novel human neuronal protein that interacts with cyclase associated proteins.</title>
        <authorList>
            <person name="Mottillo E.P."/>
            <person name="Sullivan J.M."/>
            <person name="Patel V."/>
            <person name="Lepeak W."/>
            <person name="Elferink L.A."/>
            <person name="Hubberstey A.V."/>
        </authorList>
    </citation>
    <scope>NUCLEOTIDE SEQUENCE [MRNA] (ISOFORM 1)</scope>
</reference>
<reference key="2">
    <citation type="submission" date="2003-05" db="EMBL/GenBank/DDBJ databases">
        <title>Molecular cloning and characterization of human NECAB1 gene.</title>
        <authorList>
            <person name="Guo J.H."/>
            <person name="Yu L."/>
        </authorList>
    </citation>
    <scope>NUCLEOTIDE SEQUENCE [MRNA] (ISOFORM 1)</scope>
</reference>
<reference key="3">
    <citation type="journal article" date="2004" name="Nat. Genet.">
        <title>Complete sequencing and characterization of 21,243 full-length human cDNAs.</title>
        <authorList>
            <person name="Ota T."/>
            <person name="Suzuki Y."/>
            <person name="Nishikawa T."/>
            <person name="Otsuki T."/>
            <person name="Sugiyama T."/>
            <person name="Irie R."/>
            <person name="Wakamatsu A."/>
            <person name="Hayashi K."/>
            <person name="Sato H."/>
            <person name="Nagai K."/>
            <person name="Kimura K."/>
            <person name="Makita H."/>
            <person name="Sekine M."/>
            <person name="Obayashi M."/>
            <person name="Nishi T."/>
            <person name="Shibahara T."/>
            <person name="Tanaka T."/>
            <person name="Ishii S."/>
            <person name="Yamamoto J."/>
            <person name="Saito K."/>
            <person name="Kawai Y."/>
            <person name="Isono Y."/>
            <person name="Nakamura Y."/>
            <person name="Nagahari K."/>
            <person name="Murakami K."/>
            <person name="Yasuda T."/>
            <person name="Iwayanagi T."/>
            <person name="Wagatsuma M."/>
            <person name="Shiratori A."/>
            <person name="Sudo H."/>
            <person name="Hosoiri T."/>
            <person name="Kaku Y."/>
            <person name="Kodaira H."/>
            <person name="Kondo H."/>
            <person name="Sugawara M."/>
            <person name="Takahashi M."/>
            <person name="Kanda K."/>
            <person name="Yokoi T."/>
            <person name="Furuya T."/>
            <person name="Kikkawa E."/>
            <person name="Omura Y."/>
            <person name="Abe K."/>
            <person name="Kamihara K."/>
            <person name="Katsuta N."/>
            <person name="Sato K."/>
            <person name="Tanikawa M."/>
            <person name="Yamazaki M."/>
            <person name="Ninomiya K."/>
            <person name="Ishibashi T."/>
            <person name="Yamashita H."/>
            <person name="Murakawa K."/>
            <person name="Fujimori K."/>
            <person name="Tanai H."/>
            <person name="Kimata M."/>
            <person name="Watanabe M."/>
            <person name="Hiraoka S."/>
            <person name="Chiba Y."/>
            <person name="Ishida S."/>
            <person name="Ono Y."/>
            <person name="Takiguchi S."/>
            <person name="Watanabe S."/>
            <person name="Yosida M."/>
            <person name="Hotuta T."/>
            <person name="Kusano J."/>
            <person name="Kanehori K."/>
            <person name="Takahashi-Fujii A."/>
            <person name="Hara H."/>
            <person name="Tanase T.-O."/>
            <person name="Nomura Y."/>
            <person name="Togiya S."/>
            <person name="Komai F."/>
            <person name="Hara R."/>
            <person name="Takeuchi K."/>
            <person name="Arita M."/>
            <person name="Imose N."/>
            <person name="Musashino K."/>
            <person name="Yuuki H."/>
            <person name="Oshima A."/>
            <person name="Sasaki N."/>
            <person name="Aotsuka S."/>
            <person name="Yoshikawa Y."/>
            <person name="Matsunawa H."/>
            <person name="Ichihara T."/>
            <person name="Shiohata N."/>
            <person name="Sano S."/>
            <person name="Moriya S."/>
            <person name="Momiyama H."/>
            <person name="Satoh N."/>
            <person name="Takami S."/>
            <person name="Terashima Y."/>
            <person name="Suzuki O."/>
            <person name="Nakagawa S."/>
            <person name="Senoh A."/>
            <person name="Mizoguchi H."/>
            <person name="Goto Y."/>
            <person name="Shimizu F."/>
            <person name="Wakebe H."/>
            <person name="Hishigaki H."/>
            <person name="Watanabe T."/>
            <person name="Sugiyama A."/>
            <person name="Takemoto M."/>
            <person name="Kawakami B."/>
            <person name="Yamazaki M."/>
            <person name="Watanabe K."/>
            <person name="Kumagai A."/>
            <person name="Itakura S."/>
            <person name="Fukuzumi Y."/>
            <person name="Fujimori Y."/>
            <person name="Komiyama M."/>
            <person name="Tashiro H."/>
            <person name="Tanigami A."/>
            <person name="Fujiwara T."/>
            <person name="Ono T."/>
            <person name="Yamada K."/>
            <person name="Fujii Y."/>
            <person name="Ozaki K."/>
            <person name="Hirao M."/>
            <person name="Ohmori Y."/>
            <person name="Kawabata A."/>
            <person name="Hikiji T."/>
            <person name="Kobatake N."/>
            <person name="Inagaki H."/>
            <person name="Ikema Y."/>
            <person name="Okamoto S."/>
            <person name="Okitani R."/>
            <person name="Kawakami T."/>
            <person name="Noguchi S."/>
            <person name="Itoh T."/>
            <person name="Shigeta K."/>
            <person name="Senba T."/>
            <person name="Matsumura K."/>
            <person name="Nakajima Y."/>
            <person name="Mizuno T."/>
            <person name="Morinaga M."/>
            <person name="Sasaki M."/>
            <person name="Togashi T."/>
            <person name="Oyama M."/>
            <person name="Hata H."/>
            <person name="Watanabe M."/>
            <person name="Komatsu T."/>
            <person name="Mizushima-Sugano J."/>
            <person name="Satoh T."/>
            <person name="Shirai Y."/>
            <person name="Takahashi Y."/>
            <person name="Nakagawa K."/>
            <person name="Okumura K."/>
            <person name="Nagase T."/>
            <person name="Nomura N."/>
            <person name="Kikuchi H."/>
            <person name="Masuho Y."/>
            <person name="Yamashita R."/>
            <person name="Nakai K."/>
            <person name="Yada T."/>
            <person name="Nakamura Y."/>
            <person name="Ohara O."/>
            <person name="Isogai T."/>
            <person name="Sugano S."/>
        </authorList>
    </citation>
    <scope>NUCLEOTIDE SEQUENCE [LARGE SCALE MRNA] (ISOFORM 1)</scope>
    <source>
        <tissue>Brain</tissue>
    </source>
</reference>
<reference key="4">
    <citation type="journal article" date="2004" name="Genome Res.">
        <title>The status, quality, and expansion of the NIH full-length cDNA project: the Mammalian Gene Collection (MGC).</title>
        <authorList>
            <consortium name="The MGC Project Team"/>
        </authorList>
    </citation>
    <scope>NUCLEOTIDE SEQUENCE [LARGE SCALE MRNA] (ISOFORMS 1 AND 2)</scope>
    <source>
        <tissue>Brain</tissue>
        <tissue>Kidney</tissue>
    </source>
</reference>
<reference key="5">
    <citation type="journal article" date="2002" name="Neuroscience">
        <title>NECABs: a family of neuronal Ca(2+)-binding proteins with an unusual domain structure and a restricted expression pattern.</title>
        <authorList>
            <person name="Sugita S."/>
            <person name="Ho A."/>
            <person name="Suedhof T.C."/>
        </authorList>
    </citation>
    <scope>NUCLEOTIDE SEQUENCE [MRNA] OF 97-351 (ISOFORM 1)</scope>
    <scope>INTERACTION WITH STX1 AND CPNE6</scope>
    <scope>TISSUE SPECIFICITY</scope>
    <source>
        <tissue>Brain</tissue>
    </source>
</reference>
<evidence type="ECO:0000250" key="1"/>
<evidence type="ECO:0000250" key="2">
    <source>
        <dbReference type="UniProtKB" id="Q8BG18"/>
    </source>
</evidence>
<evidence type="ECO:0000250" key="3">
    <source>
        <dbReference type="UniProtKB" id="Q9ESB5"/>
    </source>
</evidence>
<evidence type="ECO:0000255" key="4"/>
<evidence type="ECO:0000255" key="5">
    <source>
        <dbReference type="PROSITE-ProRule" id="PRU00448"/>
    </source>
</evidence>
<evidence type="ECO:0000256" key="6">
    <source>
        <dbReference type="SAM" id="MobiDB-lite"/>
    </source>
</evidence>
<evidence type="ECO:0000269" key="7">
    <source>
    </source>
</evidence>
<evidence type="ECO:0000303" key="8">
    <source>
    </source>
</evidence>
<evidence type="ECO:0000305" key="9"/>
<accession>Q8N987</accession>
<accession>Q6NUS7</accession>
<accession>Q96AZ7</accession>
<accession>Q9HBW8</accession>
<organism>
    <name type="scientific">Homo sapiens</name>
    <name type="common">Human</name>
    <dbReference type="NCBI Taxonomy" id="9606"/>
    <lineage>
        <taxon>Eukaryota</taxon>
        <taxon>Metazoa</taxon>
        <taxon>Chordata</taxon>
        <taxon>Craniata</taxon>
        <taxon>Vertebrata</taxon>
        <taxon>Euteleostomi</taxon>
        <taxon>Mammalia</taxon>
        <taxon>Eutheria</taxon>
        <taxon>Euarchontoglires</taxon>
        <taxon>Primates</taxon>
        <taxon>Haplorrhini</taxon>
        <taxon>Catarrhini</taxon>
        <taxon>Hominidae</taxon>
        <taxon>Homo</taxon>
    </lineage>
</organism>
<sequence length="351" mass="40571">MEDSQETSPSSNNSSEELSSALHLSKGMSIFLDILRRADKNDDGKLSFEEFKAYFADGVLSGEELHELFHTIDTHNTNNLDTEELCEYFSQHLGEYENVLAALEDLNLSILKAMGKTKKDYQEASNLEQFVTRFLLKETLNQLQSLQNSLECAMETTEEQTRQERQGPAKPEVLSIQWPGKRSSRRVQRHNSFSPNSPQFNVSGPGLLEEDNQWMTQINRLQKLIDRLEKKDLKLEPPEEEIIEGNTKSHIMLVQRQMSVIEEDLEEFQLALKHYVESASSQSGCLRISIQKLSNESRYMIYEFWENSSVWNSHLQTNYSKTFQRSNVDFLETPELTSTMLVPASWWILNN</sequence>
<keyword id="KW-0025">Alternative splicing</keyword>
<keyword id="KW-0106">Calcium</keyword>
<keyword id="KW-0175">Coiled coil</keyword>
<keyword id="KW-0963">Cytoplasm</keyword>
<keyword id="KW-0479">Metal-binding</keyword>
<keyword id="KW-0597">Phosphoprotein</keyword>
<keyword id="KW-1267">Proteomics identification</keyword>
<keyword id="KW-1185">Reference proteome</keyword>
<keyword id="KW-0677">Repeat</keyword>